<proteinExistence type="inferred from homology"/>
<evidence type="ECO:0000255" key="1">
    <source>
        <dbReference type="HAMAP-Rule" id="MF_00123"/>
    </source>
</evidence>
<protein>
    <recommendedName>
        <fullName evidence="1">Arginine--tRNA ligase</fullName>
        <ecNumber evidence="1">6.1.1.19</ecNumber>
    </recommendedName>
    <alternativeName>
        <fullName evidence="1">Arginyl-tRNA synthetase</fullName>
        <shortName evidence="1">ArgRS</shortName>
    </alternativeName>
</protein>
<dbReference type="EC" id="6.1.1.19" evidence="1"/>
<dbReference type="EMBL" id="CP000450">
    <property type="protein sequence ID" value="ABI59848.1"/>
    <property type="molecule type" value="Genomic_DNA"/>
</dbReference>
<dbReference type="RefSeq" id="WP_011634654.1">
    <property type="nucleotide sequence ID" value="NC_008344.1"/>
</dbReference>
<dbReference type="SMR" id="Q0AFN4"/>
<dbReference type="STRING" id="335283.Neut_1605"/>
<dbReference type="KEGG" id="net:Neut_1605"/>
<dbReference type="eggNOG" id="COG0018">
    <property type="taxonomic scope" value="Bacteria"/>
</dbReference>
<dbReference type="HOGENOM" id="CLU_006406_0_1_4"/>
<dbReference type="OrthoDB" id="9803211at2"/>
<dbReference type="Proteomes" id="UP000001966">
    <property type="component" value="Chromosome"/>
</dbReference>
<dbReference type="GO" id="GO:0005737">
    <property type="term" value="C:cytoplasm"/>
    <property type="evidence" value="ECO:0007669"/>
    <property type="project" value="UniProtKB-SubCell"/>
</dbReference>
<dbReference type="GO" id="GO:0004814">
    <property type="term" value="F:arginine-tRNA ligase activity"/>
    <property type="evidence" value="ECO:0007669"/>
    <property type="project" value="UniProtKB-UniRule"/>
</dbReference>
<dbReference type="GO" id="GO:0005524">
    <property type="term" value="F:ATP binding"/>
    <property type="evidence" value="ECO:0007669"/>
    <property type="project" value="UniProtKB-UniRule"/>
</dbReference>
<dbReference type="GO" id="GO:0006420">
    <property type="term" value="P:arginyl-tRNA aminoacylation"/>
    <property type="evidence" value="ECO:0007669"/>
    <property type="project" value="UniProtKB-UniRule"/>
</dbReference>
<dbReference type="CDD" id="cd00671">
    <property type="entry name" value="ArgRS_core"/>
    <property type="match status" value="1"/>
</dbReference>
<dbReference type="FunFam" id="1.10.730.10:FF:000008">
    <property type="entry name" value="Arginine--tRNA ligase"/>
    <property type="match status" value="1"/>
</dbReference>
<dbReference type="Gene3D" id="3.30.1360.70">
    <property type="entry name" value="Arginyl tRNA synthetase N-terminal domain"/>
    <property type="match status" value="1"/>
</dbReference>
<dbReference type="Gene3D" id="3.40.50.620">
    <property type="entry name" value="HUPs"/>
    <property type="match status" value="1"/>
</dbReference>
<dbReference type="Gene3D" id="1.10.730.10">
    <property type="entry name" value="Isoleucyl-tRNA Synthetase, Domain 1"/>
    <property type="match status" value="1"/>
</dbReference>
<dbReference type="HAMAP" id="MF_00123">
    <property type="entry name" value="Arg_tRNA_synth"/>
    <property type="match status" value="1"/>
</dbReference>
<dbReference type="InterPro" id="IPR001412">
    <property type="entry name" value="aa-tRNA-synth_I_CS"/>
</dbReference>
<dbReference type="InterPro" id="IPR001278">
    <property type="entry name" value="Arg-tRNA-ligase"/>
</dbReference>
<dbReference type="InterPro" id="IPR005148">
    <property type="entry name" value="Arg-tRNA-synth_N"/>
</dbReference>
<dbReference type="InterPro" id="IPR036695">
    <property type="entry name" value="Arg-tRNA-synth_N_sf"/>
</dbReference>
<dbReference type="InterPro" id="IPR035684">
    <property type="entry name" value="ArgRS_core"/>
</dbReference>
<dbReference type="InterPro" id="IPR008909">
    <property type="entry name" value="DALR_anticod-bd"/>
</dbReference>
<dbReference type="InterPro" id="IPR014729">
    <property type="entry name" value="Rossmann-like_a/b/a_fold"/>
</dbReference>
<dbReference type="InterPro" id="IPR009080">
    <property type="entry name" value="tRNAsynth_Ia_anticodon-bd"/>
</dbReference>
<dbReference type="NCBIfam" id="TIGR00456">
    <property type="entry name" value="argS"/>
    <property type="match status" value="1"/>
</dbReference>
<dbReference type="PANTHER" id="PTHR11956:SF5">
    <property type="entry name" value="ARGININE--TRNA LIGASE, CYTOPLASMIC"/>
    <property type="match status" value="1"/>
</dbReference>
<dbReference type="PANTHER" id="PTHR11956">
    <property type="entry name" value="ARGINYL-TRNA SYNTHETASE"/>
    <property type="match status" value="1"/>
</dbReference>
<dbReference type="Pfam" id="PF03485">
    <property type="entry name" value="Arg_tRNA_synt_N"/>
    <property type="match status" value="1"/>
</dbReference>
<dbReference type="Pfam" id="PF05746">
    <property type="entry name" value="DALR_1"/>
    <property type="match status" value="1"/>
</dbReference>
<dbReference type="Pfam" id="PF00750">
    <property type="entry name" value="tRNA-synt_1d"/>
    <property type="match status" value="2"/>
</dbReference>
<dbReference type="PRINTS" id="PR01038">
    <property type="entry name" value="TRNASYNTHARG"/>
</dbReference>
<dbReference type="SMART" id="SM01016">
    <property type="entry name" value="Arg_tRNA_synt_N"/>
    <property type="match status" value="1"/>
</dbReference>
<dbReference type="SMART" id="SM00836">
    <property type="entry name" value="DALR_1"/>
    <property type="match status" value="1"/>
</dbReference>
<dbReference type="SUPFAM" id="SSF47323">
    <property type="entry name" value="Anticodon-binding domain of a subclass of class I aminoacyl-tRNA synthetases"/>
    <property type="match status" value="1"/>
</dbReference>
<dbReference type="SUPFAM" id="SSF55190">
    <property type="entry name" value="Arginyl-tRNA synthetase (ArgRS), N-terminal 'additional' domain"/>
    <property type="match status" value="1"/>
</dbReference>
<dbReference type="SUPFAM" id="SSF52374">
    <property type="entry name" value="Nucleotidylyl transferase"/>
    <property type="match status" value="1"/>
</dbReference>
<dbReference type="PROSITE" id="PS00178">
    <property type="entry name" value="AA_TRNA_LIGASE_I"/>
    <property type="match status" value="1"/>
</dbReference>
<feature type="chain" id="PRO_1000018076" description="Arginine--tRNA ligase">
    <location>
        <begin position="1"/>
        <end position="586"/>
    </location>
</feature>
<feature type="short sequence motif" description="'HIGH' region">
    <location>
        <begin position="131"/>
        <end position="141"/>
    </location>
</feature>
<comment type="catalytic activity">
    <reaction evidence="1">
        <text>tRNA(Arg) + L-arginine + ATP = L-arginyl-tRNA(Arg) + AMP + diphosphate</text>
        <dbReference type="Rhea" id="RHEA:20301"/>
        <dbReference type="Rhea" id="RHEA-COMP:9658"/>
        <dbReference type="Rhea" id="RHEA-COMP:9673"/>
        <dbReference type="ChEBI" id="CHEBI:30616"/>
        <dbReference type="ChEBI" id="CHEBI:32682"/>
        <dbReference type="ChEBI" id="CHEBI:33019"/>
        <dbReference type="ChEBI" id="CHEBI:78442"/>
        <dbReference type="ChEBI" id="CHEBI:78513"/>
        <dbReference type="ChEBI" id="CHEBI:456215"/>
        <dbReference type="EC" id="6.1.1.19"/>
    </reaction>
</comment>
<comment type="subunit">
    <text evidence="1">Monomer.</text>
</comment>
<comment type="subcellular location">
    <subcellularLocation>
        <location evidence="1">Cytoplasm</location>
    </subcellularLocation>
</comment>
<comment type="similarity">
    <text evidence="1">Belongs to the class-I aminoacyl-tRNA synthetase family.</text>
</comment>
<keyword id="KW-0030">Aminoacyl-tRNA synthetase</keyword>
<keyword id="KW-0067">ATP-binding</keyword>
<keyword id="KW-0963">Cytoplasm</keyword>
<keyword id="KW-0436">Ligase</keyword>
<keyword id="KW-0547">Nucleotide-binding</keyword>
<keyword id="KW-0648">Protein biosynthesis</keyword>
<reference key="1">
    <citation type="journal article" date="2007" name="Environ. Microbiol.">
        <title>Whole-genome analysis of the ammonia-oxidizing bacterium, Nitrosomonas eutropha C91: implications for niche adaptation.</title>
        <authorList>
            <person name="Stein L.Y."/>
            <person name="Arp D.J."/>
            <person name="Berube P.M."/>
            <person name="Chain P.S."/>
            <person name="Hauser L."/>
            <person name="Jetten M.S."/>
            <person name="Klotz M.G."/>
            <person name="Larimer F.W."/>
            <person name="Norton J.M."/>
            <person name="Op den Camp H.J.M."/>
            <person name="Shin M."/>
            <person name="Wei X."/>
        </authorList>
    </citation>
    <scope>NUCLEOTIDE SEQUENCE [LARGE SCALE GENOMIC DNA]</scope>
    <source>
        <strain>DSM 101675 / C91 / Nm57</strain>
    </source>
</reference>
<gene>
    <name evidence="1" type="primary">argS</name>
    <name type="ordered locus">Neut_1605</name>
</gene>
<organism>
    <name type="scientific">Nitrosomonas eutropha (strain DSM 101675 / C91 / Nm57)</name>
    <dbReference type="NCBI Taxonomy" id="335283"/>
    <lineage>
        <taxon>Bacteria</taxon>
        <taxon>Pseudomonadati</taxon>
        <taxon>Pseudomonadota</taxon>
        <taxon>Betaproteobacteria</taxon>
        <taxon>Nitrosomonadales</taxon>
        <taxon>Nitrosomonadaceae</taxon>
        <taxon>Nitrosomonas</taxon>
    </lineage>
</organism>
<accession>Q0AFN4</accession>
<name>SYR_NITEC</name>
<sequence>MATTIPFDFRSHCVQLLAQAVKQVLPEETEIHIELQRPKQMDHGDYSTNLAMKLAKRLRRNPLELAKVLIGALPDSPYVGKTVVAGGGFVNFFLKKTAKQQFLLTVLQAADSFGHSKLGAGKTIQIEFVSANPTGPLHVGHGRGAAFGASLANIMAAAGYAVTREFYVNDAGRQMDILALSTWLRYLDLCGIALPFPSNAYQGRYVVDMALEIHRIHGDRYAHYSDSPTQQLAEINAKAAADGEDEYLDNLITAAKSILGEDYAYLHNFVLTEQLNDCRNDLMEFGVEFENWFSEQSLFDSGMVARAVQLLDDKKLLYRQDGALWFQSTGFGDEKDRVVQRENGQYTYFASDIAYHLSKYERGFDYMLNIWGADHHGYISRVKGAIEALSLDSDKLEIALVQFAVLYRDGNKISMSTRSGEFVTLRQLRQEVGNDAARFFYVLRKSDQHLDFDLDLAKSQSNDNPVYYVQYAHARICSVLEQWGGAVDIFGRAETELLTNPAELVLLQKIIDFPDTIEAAAKEHAPHLIAFFLRELASEFHSYYNSTRFLIPDEALKIARLALISAVCQVLSKGLSLLGVTSPRKM</sequence>